<accession>Q8ZH12</accession>
<accession>Q0WHU2</accession>
<comment type="similarity">
    <text evidence="1">Belongs to the UPF0125 (RnfH) family.</text>
</comment>
<feature type="chain" id="PRO_0000192508" description="UPF0125 protein YPO1103/y3077/YP_1053">
    <location>
        <begin position="1"/>
        <end position="94"/>
    </location>
</feature>
<reference key="1">
    <citation type="journal article" date="2001" name="Nature">
        <title>Genome sequence of Yersinia pestis, the causative agent of plague.</title>
        <authorList>
            <person name="Parkhill J."/>
            <person name="Wren B.W."/>
            <person name="Thomson N.R."/>
            <person name="Titball R.W."/>
            <person name="Holden M.T.G."/>
            <person name="Prentice M.B."/>
            <person name="Sebaihia M."/>
            <person name="James K.D."/>
            <person name="Churcher C.M."/>
            <person name="Mungall K.L."/>
            <person name="Baker S."/>
            <person name="Basham D."/>
            <person name="Bentley S.D."/>
            <person name="Brooks K."/>
            <person name="Cerdeno-Tarraga A.-M."/>
            <person name="Chillingworth T."/>
            <person name="Cronin A."/>
            <person name="Davies R.M."/>
            <person name="Davis P."/>
            <person name="Dougan G."/>
            <person name="Feltwell T."/>
            <person name="Hamlin N."/>
            <person name="Holroyd S."/>
            <person name="Jagels K."/>
            <person name="Karlyshev A.V."/>
            <person name="Leather S."/>
            <person name="Moule S."/>
            <person name="Oyston P.C.F."/>
            <person name="Quail M.A."/>
            <person name="Rutherford K.M."/>
            <person name="Simmonds M."/>
            <person name="Skelton J."/>
            <person name="Stevens K."/>
            <person name="Whitehead S."/>
            <person name="Barrell B.G."/>
        </authorList>
    </citation>
    <scope>NUCLEOTIDE SEQUENCE [LARGE SCALE GENOMIC DNA]</scope>
    <source>
        <strain>CO-92 / Biovar Orientalis</strain>
    </source>
</reference>
<reference key="2">
    <citation type="journal article" date="2002" name="J. Bacteriol.">
        <title>Genome sequence of Yersinia pestis KIM.</title>
        <authorList>
            <person name="Deng W."/>
            <person name="Burland V."/>
            <person name="Plunkett G. III"/>
            <person name="Boutin A."/>
            <person name="Mayhew G.F."/>
            <person name="Liss P."/>
            <person name="Perna N.T."/>
            <person name="Rose D.J."/>
            <person name="Mau B."/>
            <person name="Zhou S."/>
            <person name="Schwartz D.C."/>
            <person name="Fetherston J.D."/>
            <person name="Lindler L.E."/>
            <person name="Brubaker R.R."/>
            <person name="Plano G.V."/>
            <person name="Straley S.C."/>
            <person name="McDonough K.A."/>
            <person name="Nilles M.L."/>
            <person name="Matson J.S."/>
            <person name="Blattner F.R."/>
            <person name="Perry R.D."/>
        </authorList>
    </citation>
    <scope>NUCLEOTIDE SEQUENCE [LARGE SCALE GENOMIC DNA]</scope>
    <source>
        <strain>KIM10+ / Biovar Mediaevalis</strain>
    </source>
</reference>
<reference key="3">
    <citation type="journal article" date="2004" name="DNA Res.">
        <title>Complete genome sequence of Yersinia pestis strain 91001, an isolate avirulent to humans.</title>
        <authorList>
            <person name="Song Y."/>
            <person name="Tong Z."/>
            <person name="Wang J."/>
            <person name="Wang L."/>
            <person name="Guo Z."/>
            <person name="Han Y."/>
            <person name="Zhang J."/>
            <person name="Pei D."/>
            <person name="Zhou D."/>
            <person name="Qin H."/>
            <person name="Pang X."/>
            <person name="Han Y."/>
            <person name="Zhai J."/>
            <person name="Li M."/>
            <person name="Cui B."/>
            <person name="Qi Z."/>
            <person name="Jin L."/>
            <person name="Dai R."/>
            <person name="Chen F."/>
            <person name="Li S."/>
            <person name="Ye C."/>
            <person name="Du Z."/>
            <person name="Lin W."/>
            <person name="Wang J."/>
            <person name="Yu J."/>
            <person name="Yang H."/>
            <person name="Wang J."/>
            <person name="Huang P."/>
            <person name="Yang R."/>
        </authorList>
    </citation>
    <scope>NUCLEOTIDE SEQUENCE [LARGE SCALE GENOMIC DNA]</scope>
    <source>
        <strain>91001 / Biovar Mediaevalis</strain>
    </source>
</reference>
<protein>
    <recommendedName>
        <fullName evidence="1">UPF0125 protein YPO1103/y3077/YP_1053</fullName>
    </recommendedName>
</protein>
<keyword id="KW-1185">Reference proteome</keyword>
<proteinExistence type="inferred from homology"/>
<gene>
    <name type="ordered locus">YPO1103</name>
    <name type="ordered locus">y3077</name>
    <name type="ordered locus">YP_1053</name>
</gene>
<evidence type="ECO:0000255" key="1">
    <source>
        <dbReference type="HAMAP-Rule" id="MF_00460"/>
    </source>
</evidence>
<name>Y1103_YERPE</name>
<organism>
    <name type="scientific">Yersinia pestis</name>
    <dbReference type="NCBI Taxonomy" id="632"/>
    <lineage>
        <taxon>Bacteria</taxon>
        <taxon>Pseudomonadati</taxon>
        <taxon>Pseudomonadota</taxon>
        <taxon>Gammaproteobacteria</taxon>
        <taxon>Enterobacterales</taxon>
        <taxon>Yersiniaceae</taxon>
        <taxon>Yersinia</taxon>
    </lineage>
</organism>
<sequence>MPDIRVEVVYALSERQYLRTVSLVVGSTVEDAIKASGLLELRPDIDLEKNKVGIYSRPVKLGDKLNDGDRVEIYRPLIADPKELRRQRAEQAKK</sequence>
<dbReference type="EMBL" id="AL590842">
    <property type="protein sequence ID" value="CAL19769.1"/>
    <property type="molecule type" value="Genomic_DNA"/>
</dbReference>
<dbReference type="EMBL" id="AE009952">
    <property type="protein sequence ID" value="AAM86627.1"/>
    <property type="molecule type" value="Genomic_DNA"/>
</dbReference>
<dbReference type="EMBL" id="AE017042">
    <property type="protein sequence ID" value="AAS61303.1"/>
    <property type="molecule type" value="Genomic_DNA"/>
</dbReference>
<dbReference type="PIR" id="AG0135">
    <property type="entry name" value="AG0135"/>
</dbReference>
<dbReference type="RefSeq" id="WP_002210716.1">
    <property type="nucleotide sequence ID" value="NZ_WUCM01000016.1"/>
</dbReference>
<dbReference type="RefSeq" id="YP_002346146.1">
    <property type="nucleotide sequence ID" value="NC_003143.1"/>
</dbReference>
<dbReference type="SMR" id="Q8ZH12"/>
<dbReference type="STRING" id="214092.YPO1103"/>
<dbReference type="PaxDb" id="214092-YPO1103"/>
<dbReference type="DNASU" id="1148024"/>
<dbReference type="EnsemblBacteria" id="AAS61303">
    <property type="protein sequence ID" value="AAS61303"/>
    <property type="gene ID" value="YP_1053"/>
</dbReference>
<dbReference type="KEGG" id="ype:YPO1103"/>
<dbReference type="KEGG" id="ypk:y3077"/>
<dbReference type="KEGG" id="ypm:YP_1053"/>
<dbReference type="PATRIC" id="fig|214092.21.peg.1395"/>
<dbReference type="eggNOG" id="COG2914">
    <property type="taxonomic scope" value="Bacteria"/>
</dbReference>
<dbReference type="HOGENOM" id="CLU_150721_1_0_6"/>
<dbReference type="OMA" id="QQACPEV"/>
<dbReference type="OrthoDB" id="9796575at2"/>
<dbReference type="Proteomes" id="UP000000815">
    <property type="component" value="Chromosome"/>
</dbReference>
<dbReference type="Proteomes" id="UP000001019">
    <property type="component" value="Chromosome"/>
</dbReference>
<dbReference type="Proteomes" id="UP000002490">
    <property type="component" value="Chromosome"/>
</dbReference>
<dbReference type="Gene3D" id="3.10.20.280">
    <property type="entry name" value="RnfH-like"/>
    <property type="match status" value="1"/>
</dbReference>
<dbReference type="HAMAP" id="MF_00460">
    <property type="entry name" value="UPF0125_RnfH"/>
    <property type="match status" value="1"/>
</dbReference>
<dbReference type="InterPro" id="IPR016155">
    <property type="entry name" value="Mopterin_synth/thiamin_S_b"/>
</dbReference>
<dbReference type="InterPro" id="IPR005346">
    <property type="entry name" value="RnfH"/>
</dbReference>
<dbReference type="InterPro" id="IPR037021">
    <property type="entry name" value="RnfH_sf"/>
</dbReference>
<dbReference type="NCBIfam" id="NF002490">
    <property type="entry name" value="PRK01777.1"/>
    <property type="match status" value="1"/>
</dbReference>
<dbReference type="PANTHER" id="PTHR37483">
    <property type="entry name" value="UPF0125 PROTEIN RATB"/>
    <property type="match status" value="1"/>
</dbReference>
<dbReference type="PANTHER" id="PTHR37483:SF1">
    <property type="entry name" value="UPF0125 PROTEIN RATB"/>
    <property type="match status" value="1"/>
</dbReference>
<dbReference type="Pfam" id="PF03658">
    <property type="entry name" value="Ub-RnfH"/>
    <property type="match status" value="1"/>
</dbReference>
<dbReference type="SUPFAM" id="SSF54285">
    <property type="entry name" value="MoaD/ThiS"/>
    <property type="match status" value="1"/>
</dbReference>